<sequence>MSNRPNNNPGGSLRRSQRNTAGAQPQDDSIGGRSCSSSSAVIVPQPEDPDRANTSERQKTGQVPKKDNSRGVKRSASPDYNRTNSPSSAKKPRAFQHIESFSETNKPHSKSKKRHLDQEQQLKSAQLPSTSKAHTRKSVAAGSSRNQKRKRTESSCVKSGSGSESTGAEERSAKPIKLASKSATSAKAGCSTITDSSSAASTSSSSSAIASASSTVPAGARVKQGKDQNKARRSRSASSPSPRRSSREKEQSKTGGSSKFDWAARFSPKVSLPKTKLSLPGSSKSETSKPGPSGLQAKLASLRKSTKKRSESPPAELPSLRRSTRQKTTGSCASTSRRGSGLGKRGAAEARRQEKMADPESNQETVNSSAARTDEAPQGAAASSSVAGAVGMTTSGESESDDSEMGRLQALLEARGLPPHLFGPLGPRMSQLFHRTIGSGASSKAQQLLQGLQASDESQQLQAVIEMCQLLVMGNEETLGGFPVKSVVPALITLLQMEHNFDIMNHACRALTYMMEALPRSSAVVVDAIPVFLEKLQVIQCIDVAEQALTALEMLSRRHSKAILQAGGLADCLLYLEFFSINAQRNALAIAANCCQSITPDEFHFVADSLPLLTQRLTHQDKKSVESTCLCFARLVDNFQHEENLLQQVASKDLLTNVQQLLVVTPPILSSGMFIMVVRMFSLMCSNCPTLAVQLMKQNIAETLHFLLCGASNGSCQEQIDLVPRSPQELYELTSLICELMPCLPKEGIFAVDTMLKKGNAQNTDGAIWQWRDDRGLWHPYNRIDSRIIEAAHQVGEDEISLSTLGRVYTIDFNSMQQINEDTGTARAIQRKPNPLANSNTSGYSELKKDDARAQLMKEDPELAKSFIKTLFGVLYEVYSSSAGPAVRHKCLRAILRIIYFADAELLKDVLKNHAVSSHIASMLSSQDLKIVVGALQMAEILMQKLPDIFSVYFRREGVMHQVKHLAESESLLTSPPKACTNGSGSLGSTTPASSGTATAATNASADLGSPSLQHSRDDSLDLSPQGRLSDVLKRKRLPKRGPRRPKYSPPRDDDKVDNQAKSPTTTQSPKSSFLASLNPKTWGRLSAQSNSNNIEPARTAGVSGLARAASKDTISNNREKIKGWIKEQAHKFVERYFSSENMDGSNPALNVLQRLCAATEQLNLQVDGGAECLVEIRSIVSESDVSSFEIQHSGFVKQLLLYLTSKNEKDAVGREIRLKRFLHVFFSSPLPGEEPVGRVEPVGHAPLLALVHKMNNCLSQMEQFPVKVHDFPSGNGAGGSFSLNRGSQALKFFNTHQLKCQLQRHPDCANVKQWKGGPVKIDPLALVQAIERYLVVRGYGRVREDDEDSDDDGSDEEIDESLAAQFLNSGNVRHRLQFYIGEHLLPYNMTVYQAVRQFSVQAEDERESTDDESNPLGRAGIWTKTHTIWYKPVREDEESTKDCVGGKRGRAQTAPTKTSPRNAKKHDELWHDGVCPSVANPLEVYLIPTPPENITFEDPSLDVILLLRVLHAISRYWYYLYDNAMCKEIIPTSEFINSKLTAKANRQLQDPLVIMTGNIPTWLTELGKTCPFFFPFDTRQMLFYVTAFDRDRAMQRLLDTNPEINQSDSQDSRVAPRLDRKKRTVNREELLKQAESVMQDLGSSRAMLEIQYENEVGTGLGPTLEFYALVSQELQRADLCLWRGEEVTLSNPKGSQEGTKYIQNLQGLFALPFGRTAKPAHIAKVKMKFRFLGKLMAKAIMDFRLVDLPLGLPFYKWMLRQETSLTSHDLFDIDPVVARSVYHLEDIVRQKKRLEQDKSQTKESLQYALETLTMNGCSVEDLGLDFTLPGFPNIELKKGGKDIPVTIHNLEEYLRLVIFWALNEGVCRQFDSFRDGFESVFPLCHLQYFYPEELDQLLCGSKADTWDAKTLMECCRPDHGYTHDSRAVKFLFEILSSFDNEQQRLFLQFVTGSPRLPVGGFRSLNPPLTIVRKTFESTENPDDFLPSVMTCVNYLKLPDYSSIDIMRDKLLIAAREGQQSFHLS</sequence>
<feature type="initiator methionine" description="Removed" evidence="3">
    <location>
        <position position="1"/>
    </location>
</feature>
<feature type="chain" id="PRO_0000419689" description="E3 ubiquitin-protein ligase TRIP12">
    <location>
        <begin position="2"/>
        <end position="2025"/>
    </location>
</feature>
<feature type="domain" description="WWE" evidence="5">
    <location>
        <begin position="755"/>
        <end position="869"/>
    </location>
</feature>
<feature type="domain" description="HECT" evidence="4">
    <location>
        <begin position="1918"/>
        <end position="2025"/>
    </location>
</feature>
<feature type="region of interest" description="Disordered" evidence="6">
    <location>
        <begin position="1"/>
        <end position="404"/>
    </location>
</feature>
<feature type="region of interest" description="Disordered" evidence="6">
    <location>
        <begin position="970"/>
        <end position="1077"/>
    </location>
</feature>
<feature type="region of interest" description="Disordered" evidence="6">
    <location>
        <begin position="1441"/>
        <end position="1466"/>
    </location>
</feature>
<feature type="region of interest" description="K-box" evidence="1">
    <location>
        <begin position="1529"/>
        <end position="1603"/>
    </location>
</feature>
<feature type="region of interest" description="Disordered" evidence="6">
    <location>
        <begin position="1601"/>
        <end position="1620"/>
    </location>
</feature>
<feature type="compositionally biased region" description="Polar residues" evidence="6">
    <location>
        <begin position="1"/>
        <end position="10"/>
    </location>
</feature>
<feature type="compositionally biased region" description="Polar residues" evidence="6">
    <location>
        <begin position="18"/>
        <end position="27"/>
    </location>
</feature>
<feature type="compositionally biased region" description="Basic and acidic residues" evidence="6">
    <location>
        <begin position="48"/>
        <end position="70"/>
    </location>
</feature>
<feature type="compositionally biased region" description="Polar residues" evidence="6">
    <location>
        <begin position="78"/>
        <end position="88"/>
    </location>
</feature>
<feature type="compositionally biased region" description="Polar residues" evidence="6">
    <location>
        <begin position="119"/>
        <end position="132"/>
    </location>
</feature>
<feature type="compositionally biased region" description="Low complexity" evidence="6">
    <location>
        <begin position="154"/>
        <end position="166"/>
    </location>
</feature>
<feature type="compositionally biased region" description="Low complexity" evidence="6">
    <location>
        <begin position="177"/>
        <end position="215"/>
    </location>
</feature>
<feature type="compositionally biased region" description="Polar residues" evidence="6">
    <location>
        <begin position="280"/>
        <end position="290"/>
    </location>
</feature>
<feature type="compositionally biased region" description="Polar residues" evidence="6">
    <location>
        <begin position="326"/>
        <end position="338"/>
    </location>
</feature>
<feature type="compositionally biased region" description="Basic and acidic residues" evidence="6">
    <location>
        <begin position="346"/>
        <end position="358"/>
    </location>
</feature>
<feature type="compositionally biased region" description="Polar residues" evidence="6">
    <location>
        <begin position="360"/>
        <end position="371"/>
    </location>
</feature>
<feature type="compositionally biased region" description="Low complexity" evidence="6">
    <location>
        <begin position="379"/>
        <end position="397"/>
    </location>
</feature>
<feature type="compositionally biased region" description="Low complexity" evidence="6">
    <location>
        <begin position="983"/>
        <end position="1006"/>
    </location>
</feature>
<feature type="compositionally biased region" description="Basic residues" evidence="6">
    <location>
        <begin position="1034"/>
        <end position="1047"/>
    </location>
</feature>
<feature type="compositionally biased region" description="Basic and acidic residues" evidence="6">
    <location>
        <begin position="1050"/>
        <end position="1059"/>
    </location>
</feature>
<feature type="compositionally biased region" description="Low complexity" evidence="6">
    <location>
        <begin position="1062"/>
        <end position="1073"/>
    </location>
</feature>
<feature type="active site" description="Glycyl thioester intermediate" evidence="4">
    <location>
        <position position="1992"/>
    </location>
</feature>
<feature type="modified residue" description="N-acetylserine" evidence="3">
    <location>
        <position position="2"/>
    </location>
</feature>
<feature type="modified residue" description="Phosphoserine" evidence="3">
    <location>
        <position position="12"/>
    </location>
</feature>
<feature type="modified residue" description="Phosphoserine" evidence="3">
    <location>
        <position position="77"/>
    </location>
</feature>
<feature type="modified residue" description="Phosphoserine" evidence="10">
    <location>
        <position position="85"/>
    </location>
</feature>
<feature type="modified residue" description="Phosphoserine" evidence="3">
    <location>
        <position position="100"/>
    </location>
</feature>
<feature type="modified residue" description="N6-acetyllysine" evidence="11">
    <location>
        <position position="181"/>
    </location>
</feature>
<feature type="modified residue" description="Phosphoserine" evidence="10">
    <location>
        <position position="310"/>
    </location>
</feature>
<feature type="modified residue" description="Phosphoserine" evidence="9 10">
    <location>
        <position position="312"/>
    </location>
</feature>
<feature type="modified residue" description="Phosphoserine" evidence="9 10">
    <location>
        <position position="975"/>
    </location>
</feature>
<feature type="modified residue" description="Phosphoserine" evidence="10">
    <location>
        <position position="1024"/>
    </location>
</feature>
<feature type="modified residue" description="Phosphoserine" evidence="10">
    <location>
        <position position="1030"/>
    </location>
</feature>
<feature type="modified residue" description="Phosphoserine" evidence="2">
    <location>
        <position position="1049"/>
    </location>
</feature>
<feature type="modified residue" description="Phosphoserine" evidence="3">
    <location>
        <position position="1063"/>
    </location>
</feature>
<feature type="modified residue" description="Phosphoserine" evidence="10">
    <location>
        <position position="1350"/>
    </location>
</feature>
<feature type="modified residue" description="Phosphoserine" evidence="10">
    <location>
        <position position="1355"/>
    </location>
</feature>
<feature type="modified residue" description="Phosphoserine" evidence="10">
    <location>
        <position position="1362"/>
    </location>
</feature>
<feature type="modified residue" description="Phosphoserine" evidence="2">
    <location>
        <position position="1409"/>
    </location>
</feature>
<feature type="modified residue" description="Phosphothreonine" evidence="2">
    <location>
        <position position="1410"/>
    </location>
</feature>
<feature type="modified residue" description="N6-acetyllysine" evidence="11">
    <location>
        <position position="1458"/>
    </location>
</feature>
<feature type="modified residue" description="Phosphoserine" evidence="10">
    <location>
        <position position="1460"/>
    </location>
</feature>
<name>TRIPC_MOUSE</name>
<evidence type="ECO:0000250" key="1"/>
<evidence type="ECO:0000250" key="2">
    <source>
        <dbReference type="UniProtKB" id="F1LP64"/>
    </source>
</evidence>
<evidence type="ECO:0000250" key="3">
    <source>
        <dbReference type="UniProtKB" id="Q14669"/>
    </source>
</evidence>
<evidence type="ECO:0000255" key="4">
    <source>
        <dbReference type="PROSITE-ProRule" id="PRU00104"/>
    </source>
</evidence>
<evidence type="ECO:0000255" key="5">
    <source>
        <dbReference type="PROSITE-ProRule" id="PRU00248"/>
    </source>
</evidence>
<evidence type="ECO:0000256" key="6">
    <source>
        <dbReference type="SAM" id="MobiDB-lite"/>
    </source>
</evidence>
<evidence type="ECO:0000269" key="7">
    <source>
    </source>
</evidence>
<evidence type="ECO:0000305" key="8"/>
<evidence type="ECO:0007744" key="9">
    <source>
    </source>
</evidence>
<evidence type="ECO:0007744" key="10">
    <source>
    </source>
</evidence>
<evidence type="ECO:0007744" key="11">
    <source>
    </source>
</evidence>
<dbReference type="EC" id="2.3.2.26" evidence="3"/>
<dbReference type="EMBL" id="AC123882">
    <property type="status" value="NOT_ANNOTATED_CDS"/>
    <property type="molecule type" value="Genomic_DNA"/>
</dbReference>
<dbReference type="EMBL" id="CH466629">
    <property type="protein sequence ID" value="EDL02171.1"/>
    <property type="molecule type" value="Genomic_DNA"/>
</dbReference>
<dbReference type="EMBL" id="CH466629">
    <property type="protein sequence ID" value="EDL02178.1"/>
    <property type="molecule type" value="Genomic_DNA"/>
</dbReference>
<dbReference type="EMBL" id="CH466629">
    <property type="protein sequence ID" value="EDL02182.1"/>
    <property type="molecule type" value="Genomic_DNA"/>
</dbReference>
<dbReference type="EMBL" id="AK034814">
    <property type="protein sequence ID" value="BAC28839.1"/>
    <property type="molecule type" value="mRNA"/>
</dbReference>
<dbReference type="EMBL" id="AK134397">
    <property type="protein sequence ID" value="BAE22126.1"/>
    <property type="molecule type" value="mRNA"/>
</dbReference>
<dbReference type="EMBL" id="AK158807">
    <property type="protein sequence ID" value="BAE34675.1"/>
    <property type="molecule type" value="mRNA"/>
</dbReference>
<dbReference type="EMBL" id="BC034113">
    <property type="protein sequence ID" value="AAH34113.2"/>
    <property type="molecule type" value="mRNA"/>
</dbReference>
<dbReference type="CCDS" id="CCDS35633.1"/>
<dbReference type="RefSeq" id="NP_598736.4">
    <property type="nucleotide sequence ID" value="NM_133975.4"/>
</dbReference>
<dbReference type="RefSeq" id="XP_036017145.1">
    <property type="nucleotide sequence ID" value="XM_036161252.1"/>
</dbReference>
<dbReference type="RefSeq" id="XP_036017160.1">
    <property type="nucleotide sequence ID" value="XM_036161267.1"/>
</dbReference>
<dbReference type="SMR" id="G5E870"/>
<dbReference type="BioGRID" id="200117">
    <property type="interactions" value="12"/>
</dbReference>
<dbReference type="FunCoup" id="G5E870">
    <property type="interactions" value="3839"/>
</dbReference>
<dbReference type="IntAct" id="G5E870">
    <property type="interactions" value="2"/>
</dbReference>
<dbReference type="STRING" id="10090.ENSMUSP00000027421"/>
<dbReference type="GlyGen" id="G5E870">
    <property type="glycosylation" value="4 sites, 2 N-linked glycans (2 sites), 1 O-linked glycan (2 sites)"/>
</dbReference>
<dbReference type="iPTMnet" id="G5E870"/>
<dbReference type="PhosphoSitePlus" id="G5E870"/>
<dbReference type="SwissPalm" id="G5E870"/>
<dbReference type="jPOST" id="G5E870"/>
<dbReference type="PaxDb" id="10090-ENSMUSP00000027421"/>
<dbReference type="PeptideAtlas" id="G5E870"/>
<dbReference type="ProteomicsDB" id="298314"/>
<dbReference type="Pumba" id="G5E870"/>
<dbReference type="Antibodypedia" id="34396">
    <property type="antibodies" value="69 antibodies from 23 providers"/>
</dbReference>
<dbReference type="DNASU" id="14897"/>
<dbReference type="Ensembl" id="ENSMUST00000027421.13">
    <property type="protein sequence ID" value="ENSMUSP00000027421.7"/>
    <property type="gene ID" value="ENSMUSG00000026219.15"/>
</dbReference>
<dbReference type="Ensembl" id="ENSMUST00000186465.7">
    <property type="protein sequence ID" value="ENSMUSP00000140224.2"/>
    <property type="gene ID" value="ENSMUSG00000026219.15"/>
</dbReference>
<dbReference type="GeneID" id="14897"/>
<dbReference type="KEGG" id="mmu:14897"/>
<dbReference type="UCSC" id="uc007bsy.1">
    <property type="organism name" value="mouse"/>
</dbReference>
<dbReference type="AGR" id="MGI:1309481"/>
<dbReference type="CTD" id="9320"/>
<dbReference type="MGI" id="MGI:1309481">
    <property type="gene designation" value="Trip12"/>
</dbReference>
<dbReference type="VEuPathDB" id="HostDB:ENSMUSG00000026219"/>
<dbReference type="eggNOG" id="KOG0168">
    <property type="taxonomic scope" value="Eukaryota"/>
</dbReference>
<dbReference type="eggNOG" id="KOG0170">
    <property type="taxonomic scope" value="Eukaryota"/>
</dbReference>
<dbReference type="GeneTree" id="ENSGT00940000156517"/>
<dbReference type="HOGENOM" id="CLU_000366_2_0_1"/>
<dbReference type="InParanoid" id="G5E870"/>
<dbReference type="OMA" id="AEPLSQF"/>
<dbReference type="OrthoDB" id="271273at2759"/>
<dbReference type="PhylomeDB" id="G5E870"/>
<dbReference type="TreeFam" id="TF323674"/>
<dbReference type="Reactome" id="R-MMU-983168">
    <property type="pathway name" value="Antigen processing: Ubiquitination &amp; Proteasome degradation"/>
</dbReference>
<dbReference type="UniPathway" id="UPA00143"/>
<dbReference type="BioGRID-ORCS" id="14897">
    <property type="hits" value="9 hits in 112 CRISPR screens"/>
</dbReference>
<dbReference type="ChiTaRS" id="Trip12">
    <property type="organism name" value="mouse"/>
</dbReference>
<dbReference type="PRO" id="PR:G5E870"/>
<dbReference type="Proteomes" id="UP000000589">
    <property type="component" value="Chromosome 1"/>
</dbReference>
<dbReference type="RNAct" id="G5E870">
    <property type="molecule type" value="protein"/>
</dbReference>
<dbReference type="Bgee" id="ENSMUSG00000026219">
    <property type="expression patterns" value="Expressed in spermatid and 260 other cell types or tissues"/>
</dbReference>
<dbReference type="ExpressionAtlas" id="G5E870">
    <property type="expression patterns" value="baseline and differential"/>
</dbReference>
<dbReference type="GO" id="GO:0016607">
    <property type="term" value="C:nuclear speck"/>
    <property type="evidence" value="ECO:0007669"/>
    <property type="project" value="Ensembl"/>
</dbReference>
<dbReference type="GO" id="GO:0005654">
    <property type="term" value="C:nucleoplasm"/>
    <property type="evidence" value="ECO:0000250"/>
    <property type="project" value="UniProtKB"/>
</dbReference>
<dbReference type="GO" id="GO:0061630">
    <property type="term" value="F:ubiquitin protein ligase activity"/>
    <property type="evidence" value="ECO:0000250"/>
    <property type="project" value="UniProtKB"/>
</dbReference>
<dbReference type="GO" id="GO:0008270">
    <property type="term" value="F:zinc ion binding"/>
    <property type="evidence" value="ECO:0007669"/>
    <property type="project" value="InterPro"/>
</dbReference>
<dbReference type="GO" id="GO:0006281">
    <property type="term" value="P:DNA repair"/>
    <property type="evidence" value="ECO:0007669"/>
    <property type="project" value="UniProtKB-KW"/>
</dbReference>
<dbReference type="GO" id="GO:0140861">
    <property type="term" value="P:DNA repair-dependent chromatin remodeling"/>
    <property type="evidence" value="ECO:0000250"/>
    <property type="project" value="UniProtKB"/>
</dbReference>
<dbReference type="GO" id="GO:0033696">
    <property type="term" value="P:heterochromatin boundary formation"/>
    <property type="evidence" value="ECO:0000250"/>
    <property type="project" value="UniProtKB"/>
</dbReference>
<dbReference type="GO" id="GO:0000209">
    <property type="term" value="P:protein polyubiquitination"/>
    <property type="evidence" value="ECO:0000250"/>
    <property type="project" value="UniProtKB"/>
</dbReference>
<dbReference type="GO" id="GO:0045995">
    <property type="term" value="P:regulation of embryonic development"/>
    <property type="evidence" value="ECO:0000315"/>
    <property type="project" value="UniProtKB"/>
</dbReference>
<dbReference type="GO" id="GO:0006511">
    <property type="term" value="P:ubiquitin-dependent protein catabolic process"/>
    <property type="evidence" value="ECO:0000250"/>
    <property type="project" value="UniProtKB"/>
</dbReference>
<dbReference type="CDD" id="cd00078">
    <property type="entry name" value="HECTc"/>
    <property type="match status" value="1"/>
</dbReference>
<dbReference type="FunFam" id="3.30.2160.10:FF:000013">
    <property type="entry name" value="E3 ubiquitin-protein ligase TRIP12 isoform X1"/>
    <property type="match status" value="1"/>
</dbReference>
<dbReference type="FunFam" id="3.30.2410.10:FF:000005">
    <property type="entry name" value="E3 ubiquitin-protein ligase TRIP12 isoform X1"/>
    <property type="match status" value="1"/>
</dbReference>
<dbReference type="FunFam" id="3.30.720.50:FF:000001">
    <property type="entry name" value="E3 ubiquitin-protein ligase TRIP12 isoform X1"/>
    <property type="match status" value="1"/>
</dbReference>
<dbReference type="FunFam" id="3.90.1750.10:FF:000006">
    <property type="entry name" value="E3 ubiquitin-protein ligase TRIP12 isoform X1"/>
    <property type="match status" value="1"/>
</dbReference>
<dbReference type="FunFam" id="1.25.10.10:FF:000018">
    <property type="entry name" value="E3 ubiquitin-protein ligase TRIP12 isoform X3"/>
    <property type="match status" value="1"/>
</dbReference>
<dbReference type="Gene3D" id="3.30.720.50">
    <property type="match status" value="1"/>
</dbReference>
<dbReference type="Gene3D" id="3.30.2410.10">
    <property type="entry name" value="Hect, E3 ligase catalytic domain"/>
    <property type="match status" value="1"/>
</dbReference>
<dbReference type="Gene3D" id="3.90.1750.10">
    <property type="entry name" value="Hect, E3 ligase catalytic domains"/>
    <property type="match status" value="1"/>
</dbReference>
<dbReference type="Gene3D" id="1.25.10.10">
    <property type="entry name" value="Leucine-rich Repeat Variant"/>
    <property type="match status" value="1"/>
</dbReference>
<dbReference type="InterPro" id="IPR011989">
    <property type="entry name" value="ARM-like"/>
</dbReference>
<dbReference type="InterPro" id="IPR016024">
    <property type="entry name" value="ARM-type_fold"/>
</dbReference>
<dbReference type="InterPro" id="IPR000569">
    <property type="entry name" value="HECT_dom"/>
</dbReference>
<dbReference type="InterPro" id="IPR035983">
    <property type="entry name" value="Hect_E3_ubiquitin_ligase"/>
</dbReference>
<dbReference type="InterPro" id="IPR045322">
    <property type="entry name" value="HECTD1/TRIP12-like"/>
</dbReference>
<dbReference type="InterPro" id="IPR018123">
    <property type="entry name" value="WWE-dom_subgr"/>
</dbReference>
<dbReference type="InterPro" id="IPR004170">
    <property type="entry name" value="WWE_dom"/>
</dbReference>
<dbReference type="InterPro" id="IPR037197">
    <property type="entry name" value="WWE_dom_sf"/>
</dbReference>
<dbReference type="PANTHER" id="PTHR45670">
    <property type="entry name" value="E3 UBIQUITIN-PROTEIN LIGASE TRIP12"/>
    <property type="match status" value="1"/>
</dbReference>
<dbReference type="PANTHER" id="PTHR45670:SF13">
    <property type="entry name" value="E3 UBIQUITIN-PROTEIN LIGASE TRIP12"/>
    <property type="match status" value="1"/>
</dbReference>
<dbReference type="Pfam" id="PF00632">
    <property type="entry name" value="HECT"/>
    <property type="match status" value="1"/>
</dbReference>
<dbReference type="Pfam" id="PF02825">
    <property type="entry name" value="WWE"/>
    <property type="match status" value="1"/>
</dbReference>
<dbReference type="SMART" id="SM00119">
    <property type="entry name" value="HECTc"/>
    <property type="match status" value="1"/>
</dbReference>
<dbReference type="SMART" id="SM00678">
    <property type="entry name" value="WWE"/>
    <property type="match status" value="1"/>
</dbReference>
<dbReference type="SUPFAM" id="SSF48371">
    <property type="entry name" value="ARM repeat"/>
    <property type="match status" value="1"/>
</dbReference>
<dbReference type="SUPFAM" id="SSF56204">
    <property type="entry name" value="Hect, E3 ligase catalytic domain"/>
    <property type="match status" value="1"/>
</dbReference>
<dbReference type="SUPFAM" id="SSF117839">
    <property type="entry name" value="WWE domain"/>
    <property type="match status" value="1"/>
</dbReference>
<dbReference type="PROSITE" id="PS50237">
    <property type="entry name" value="HECT"/>
    <property type="match status" value="1"/>
</dbReference>
<dbReference type="PROSITE" id="PS50918">
    <property type="entry name" value="WWE"/>
    <property type="match status" value="1"/>
</dbReference>
<proteinExistence type="evidence at protein level"/>
<keyword id="KW-0007">Acetylation</keyword>
<keyword id="KW-0227">DNA damage</keyword>
<keyword id="KW-0234">DNA repair</keyword>
<keyword id="KW-0539">Nucleus</keyword>
<keyword id="KW-0597">Phosphoprotein</keyword>
<keyword id="KW-1185">Reference proteome</keyword>
<keyword id="KW-0808">Transferase</keyword>
<keyword id="KW-0833">Ubl conjugation pathway</keyword>
<organism>
    <name type="scientific">Mus musculus</name>
    <name type="common">Mouse</name>
    <dbReference type="NCBI Taxonomy" id="10090"/>
    <lineage>
        <taxon>Eukaryota</taxon>
        <taxon>Metazoa</taxon>
        <taxon>Chordata</taxon>
        <taxon>Craniata</taxon>
        <taxon>Vertebrata</taxon>
        <taxon>Euteleostomi</taxon>
        <taxon>Mammalia</taxon>
        <taxon>Eutheria</taxon>
        <taxon>Euarchontoglires</taxon>
        <taxon>Glires</taxon>
        <taxon>Rodentia</taxon>
        <taxon>Myomorpha</taxon>
        <taxon>Muroidea</taxon>
        <taxon>Muridae</taxon>
        <taxon>Murinae</taxon>
        <taxon>Mus</taxon>
        <taxon>Mus</taxon>
    </lineage>
</organism>
<comment type="function">
    <text evidence="3">E3 ubiquitin-protein ligase involved in ubiquitin fusion degradation (UFD) pathway and regulation of DNA repair. Part of the ubiquitin fusion degradation (UFD) pathway, a process that mediates ubiquitination of protein at their N-terminus, regardless of the presence of lysine residues in target proteins. Acts as a key regulator of DNA damage response by acting as a suppressor of RNF168, an E3 ubiquitin-protein ligase that promotes accumulation of 'Lys-63'-linked histone H2A and H2AX at DNA damage sites, thereby acting as a guard against excessive spreading of ubiquitinated chromatin at damaged chromosomes. In normal cells, mediates ubiquitination and degradation of isoform p19ARF/ARF of CDKN2A, a lysine-less tumor suppressor required for p53/TP53 activation under oncogenic stress. In cancer cells, however, isoform p19ARF/ARF and TRIP12 are located in different cell compartments, preventing isoform p19ARF/ARF ubiquitination and degradation. Does not mediate ubiquitination of isoform p16-INK4a of CDKN2A. Also catalyzes ubiquitination of NAE1 and SMARCE1, leading to their degradation. Ubiquitination and degradation of target proteins is regulated by interaction with proteins such as MYC, TRADD or SMARCC1, which disrupt the interaction between TRIP12 and target proteins. Mediates ubiquitination of ASXL1: following binding to N(6)-methyladenosine methylated DNA, ASXL1 is ubiquitinated by TRIP12, leading to its degradation and subsequent inactivation of the PR-DUB complex.</text>
</comment>
<comment type="catalytic activity">
    <reaction evidence="3">
        <text>S-ubiquitinyl-[E2 ubiquitin-conjugating enzyme]-L-cysteine + [acceptor protein]-L-lysine = [E2 ubiquitin-conjugating enzyme]-L-cysteine + N(6)-ubiquitinyl-[acceptor protein]-L-lysine.</text>
        <dbReference type="EC" id="2.3.2.26"/>
    </reaction>
</comment>
<comment type="pathway">
    <text evidence="3">Protein modification; protein ubiquitination.</text>
</comment>
<comment type="subunit">
    <text evidence="3">Interacts with MYC; leading to disrupt interaction with isoform p19ARF/ARF of CDKN2A. Interacts with TRADD; leading to disrupt interaction with isoform p19ARF/ARF of CDKN2A. Interacts with SMARCC1; leading to disrupt interaction with SMARCE1.</text>
</comment>
<comment type="subcellular location">
    <subcellularLocation>
        <location evidence="3">Nucleus</location>
        <location evidence="3">Nucleoplasm</location>
    </subcellularLocation>
</comment>
<comment type="disruption phenotype">
    <text evidence="7">Embryonic lethality in the middle stage of development. Embryos exhibit growth arrest, while ES cells are viable. ES cells show decreased proliferation, but maintain both the undifferentiated state and the ability to differentiate.</text>
</comment>
<comment type="similarity">
    <text evidence="8">Belongs to the UPL family. K-HECT subfamily.</text>
</comment>
<gene>
    <name type="primary">Trip12</name>
</gene>
<accession>G5E870</accession>
<accession>Q3TY88</accession>
<accession>Q3UYT5</accession>
<accession>Q8BM59</accession>
<accession>Q8K051</accession>
<protein>
    <recommendedName>
        <fullName>E3 ubiquitin-protein ligase TRIP12</fullName>
        <ecNumber evidence="3">2.3.2.26</ecNumber>
    </recommendedName>
    <alternativeName>
        <fullName>HECT-type E3 ubiquitin transferase TRIP12</fullName>
    </alternativeName>
    <alternativeName>
        <fullName>Thyroid receptor-interacting protein 12</fullName>
        <shortName>TR-interacting protein 12</shortName>
        <shortName>TRIP-12</shortName>
    </alternativeName>
</protein>
<reference key="1">
    <citation type="journal article" date="2009" name="PLoS Biol.">
        <title>Lineage-specific biology revealed by a finished genome assembly of the mouse.</title>
        <authorList>
            <person name="Church D.M."/>
            <person name="Goodstadt L."/>
            <person name="Hillier L.W."/>
            <person name="Zody M.C."/>
            <person name="Goldstein S."/>
            <person name="She X."/>
            <person name="Bult C.J."/>
            <person name="Agarwala R."/>
            <person name="Cherry J.L."/>
            <person name="DiCuccio M."/>
            <person name="Hlavina W."/>
            <person name="Kapustin Y."/>
            <person name="Meric P."/>
            <person name="Maglott D."/>
            <person name="Birtle Z."/>
            <person name="Marques A.C."/>
            <person name="Graves T."/>
            <person name="Zhou S."/>
            <person name="Teague B."/>
            <person name="Potamousis K."/>
            <person name="Churas C."/>
            <person name="Place M."/>
            <person name="Herschleb J."/>
            <person name="Runnheim R."/>
            <person name="Forrest D."/>
            <person name="Amos-Landgraf J."/>
            <person name="Schwartz D.C."/>
            <person name="Cheng Z."/>
            <person name="Lindblad-Toh K."/>
            <person name="Eichler E.E."/>
            <person name="Ponting C.P."/>
        </authorList>
    </citation>
    <scope>NUCLEOTIDE SEQUENCE [LARGE SCALE GENOMIC DNA]</scope>
    <source>
        <strain>C57BL/6J</strain>
    </source>
</reference>
<reference key="2">
    <citation type="submission" date="2005-07" db="EMBL/GenBank/DDBJ databases">
        <authorList>
            <person name="Mural R.J."/>
            <person name="Adams M.D."/>
            <person name="Myers E.W."/>
            <person name="Smith H.O."/>
            <person name="Venter J.C."/>
        </authorList>
    </citation>
    <scope>NUCLEOTIDE SEQUENCE [LARGE SCALE GENOMIC DNA]</scope>
</reference>
<reference key="3">
    <citation type="journal article" date="2005" name="Science">
        <title>The transcriptional landscape of the mammalian genome.</title>
        <authorList>
            <person name="Carninci P."/>
            <person name="Kasukawa T."/>
            <person name="Katayama S."/>
            <person name="Gough J."/>
            <person name="Frith M.C."/>
            <person name="Maeda N."/>
            <person name="Oyama R."/>
            <person name="Ravasi T."/>
            <person name="Lenhard B."/>
            <person name="Wells C."/>
            <person name="Kodzius R."/>
            <person name="Shimokawa K."/>
            <person name="Bajic V.B."/>
            <person name="Brenner S.E."/>
            <person name="Batalov S."/>
            <person name="Forrest A.R."/>
            <person name="Zavolan M."/>
            <person name="Davis M.J."/>
            <person name="Wilming L.G."/>
            <person name="Aidinis V."/>
            <person name="Allen J.E."/>
            <person name="Ambesi-Impiombato A."/>
            <person name="Apweiler R."/>
            <person name="Aturaliya R.N."/>
            <person name="Bailey T.L."/>
            <person name="Bansal M."/>
            <person name="Baxter L."/>
            <person name="Beisel K.W."/>
            <person name="Bersano T."/>
            <person name="Bono H."/>
            <person name="Chalk A.M."/>
            <person name="Chiu K.P."/>
            <person name="Choudhary V."/>
            <person name="Christoffels A."/>
            <person name="Clutterbuck D.R."/>
            <person name="Crowe M.L."/>
            <person name="Dalla E."/>
            <person name="Dalrymple B.P."/>
            <person name="de Bono B."/>
            <person name="Della Gatta G."/>
            <person name="di Bernardo D."/>
            <person name="Down T."/>
            <person name="Engstrom P."/>
            <person name="Fagiolini M."/>
            <person name="Faulkner G."/>
            <person name="Fletcher C.F."/>
            <person name="Fukushima T."/>
            <person name="Furuno M."/>
            <person name="Futaki S."/>
            <person name="Gariboldi M."/>
            <person name="Georgii-Hemming P."/>
            <person name="Gingeras T.R."/>
            <person name="Gojobori T."/>
            <person name="Green R.E."/>
            <person name="Gustincich S."/>
            <person name="Harbers M."/>
            <person name="Hayashi Y."/>
            <person name="Hensch T.K."/>
            <person name="Hirokawa N."/>
            <person name="Hill D."/>
            <person name="Huminiecki L."/>
            <person name="Iacono M."/>
            <person name="Ikeo K."/>
            <person name="Iwama A."/>
            <person name="Ishikawa T."/>
            <person name="Jakt M."/>
            <person name="Kanapin A."/>
            <person name="Katoh M."/>
            <person name="Kawasawa Y."/>
            <person name="Kelso J."/>
            <person name="Kitamura H."/>
            <person name="Kitano H."/>
            <person name="Kollias G."/>
            <person name="Krishnan S.P."/>
            <person name="Kruger A."/>
            <person name="Kummerfeld S.K."/>
            <person name="Kurochkin I.V."/>
            <person name="Lareau L.F."/>
            <person name="Lazarevic D."/>
            <person name="Lipovich L."/>
            <person name="Liu J."/>
            <person name="Liuni S."/>
            <person name="McWilliam S."/>
            <person name="Madan Babu M."/>
            <person name="Madera M."/>
            <person name="Marchionni L."/>
            <person name="Matsuda H."/>
            <person name="Matsuzawa S."/>
            <person name="Miki H."/>
            <person name="Mignone F."/>
            <person name="Miyake S."/>
            <person name="Morris K."/>
            <person name="Mottagui-Tabar S."/>
            <person name="Mulder N."/>
            <person name="Nakano N."/>
            <person name="Nakauchi H."/>
            <person name="Ng P."/>
            <person name="Nilsson R."/>
            <person name="Nishiguchi S."/>
            <person name="Nishikawa S."/>
            <person name="Nori F."/>
            <person name="Ohara O."/>
            <person name="Okazaki Y."/>
            <person name="Orlando V."/>
            <person name="Pang K.C."/>
            <person name="Pavan W.J."/>
            <person name="Pavesi G."/>
            <person name="Pesole G."/>
            <person name="Petrovsky N."/>
            <person name="Piazza S."/>
            <person name="Reed J."/>
            <person name="Reid J.F."/>
            <person name="Ring B.Z."/>
            <person name="Ringwald M."/>
            <person name="Rost B."/>
            <person name="Ruan Y."/>
            <person name="Salzberg S.L."/>
            <person name="Sandelin A."/>
            <person name="Schneider C."/>
            <person name="Schoenbach C."/>
            <person name="Sekiguchi K."/>
            <person name="Semple C.A."/>
            <person name="Seno S."/>
            <person name="Sessa L."/>
            <person name="Sheng Y."/>
            <person name="Shibata Y."/>
            <person name="Shimada H."/>
            <person name="Shimada K."/>
            <person name="Silva D."/>
            <person name="Sinclair B."/>
            <person name="Sperling S."/>
            <person name="Stupka E."/>
            <person name="Sugiura K."/>
            <person name="Sultana R."/>
            <person name="Takenaka Y."/>
            <person name="Taki K."/>
            <person name="Tammoja K."/>
            <person name="Tan S.L."/>
            <person name="Tang S."/>
            <person name="Taylor M.S."/>
            <person name="Tegner J."/>
            <person name="Teichmann S.A."/>
            <person name="Ueda H.R."/>
            <person name="van Nimwegen E."/>
            <person name="Verardo R."/>
            <person name="Wei C.L."/>
            <person name="Yagi K."/>
            <person name="Yamanishi H."/>
            <person name="Zabarovsky E."/>
            <person name="Zhu S."/>
            <person name="Zimmer A."/>
            <person name="Hide W."/>
            <person name="Bult C."/>
            <person name="Grimmond S.M."/>
            <person name="Teasdale R.D."/>
            <person name="Liu E.T."/>
            <person name="Brusic V."/>
            <person name="Quackenbush J."/>
            <person name="Wahlestedt C."/>
            <person name="Mattick J.S."/>
            <person name="Hume D.A."/>
            <person name="Kai C."/>
            <person name="Sasaki D."/>
            <person name="Tomaru Y."/>
            <person name="Fukuda S."/>
            <person name="Kanamori-Katayama M."/>
            <person name="Suzuki M."/>
            <person name="Aoki J."/>
            <person name="Arakawa T."/>
            <person name="Iida J."/>
            <person name="Imamura K."/>
            <person name="Itoh M."/>
            <person name="Kato T."/>
            <person name="Kawaji H."/>
            <person name="Kawagashira N."/>
            <person name="Kawashima T."/>
            <person name="Kojima M."/>
            <person name="Kondo S."/>
            <person name="Konno H."/>
            <person name="Nakano K."/>
            <person name="Ninomiya N."/>
            <person name="Nishio T."/>
            <person name="Okada M."/>
            <person name="Plessy C."/>
            <person name="Shibata K."/>
            <person name="Shiraki T."/>
            <person name="Suzuki S."/>
            <person name="Tagami M."/>
            <person name="Waki K."/>
            <person name="Watahiki A."/>
            <person name="Okamura-Oho Y."/>
            <person name="Suzuki H."/>
            <person name="Kawai J."/>
            <person name="Hayashizaki Y."/>
        </authorList>
    </citation>
    <scope>NUCLEOTIDE SEQUENCE [LARGE SCALE MRNA] OF 1-983 AND 1669-2025</scope>
    <source>
        <strain>C57BL/6J</strain>
        <tissue>Embryo</tissue>
        <tissue>Testis</tissue>
        <tissue>Visual cortex</tissue>
    </source>
</reference>
<reference key="4">
    <citation type="journal article" date="2004" name="Genome Res.">
        <title>The status, quality, and expansion of the NIH full-length cDNA project: the Mammalian Gene Collection (MGC).</title>
        <authorList>
            <consortium name="The MGC Project Team"/>
        </authorList>
    </citation>
    <scope>NUCLEOTIDE SEQUENCE [LARGE SCALE MRNA] OF 824-2025</scope>
    <source>
        <tissue>Eye</tissue>
    </source>
</reference>
<reference key="5">
    <citation type="journal article" date="2009" name="Immunity">
        <title>The phagosomal proteome in interferon-gamma-activated macrophages.</title>
        <authorList>
            <person name="Trost M."/>
            <person name="English L."/>
            <person name="Lemieux S."/>
            <person name="Courcelles M."/>
            <person name="Desjardins M."/>
            <person name="Thibault P."/>
        </authorList>
    </citation>
    <scope>PHOSPHORYLATION [LARGE SCALE ANALYSIS] AT SER-312 AND SER-975</scope>
    <scope>IDENTIFICATION BY MASS SPECTROMETRY [LARGE SCALE ANALYSIS]</scope>
</reference>
<reference key="6">
    <citation type="journal article" date="2010" name="Cell">
        <title>A tissue-specific atlas of mouse protein phosphorylation and expression.</title>
        <authorList>
            <person name="Huttlin E.L."/>
            <person name="Jedrychowski M.P."/>
            <person name="Elias J.E."/>
            <person name="Goswami T."/>
            <person name="Rad R."/>
            <person name="Beausoleil S.A."/>
            <person name="Villen J."/>
            <person name="Haas W."/>
            <person name="Sowa M.E."/>
            <person name="Gygi S.P."/>
        </authorList>
    </citation>
    <scope>PHOSPHORYLATION [LARGE SCALE ANALYSIS] AT SER-85; SER-310; SER-312; SER-975; SER-1024; SER-1030; SER-1350; SER-1355; SER-1362 AND SER-1460</scope>
    <scope>IDENTIFICATION BY MASS SPECTROMETRY [LARGE SCALE ANALYSIS]</scope>
    <source>
        <tissue>Brain</tissue>
        <tissue>Brown adipose tissue</tissue>
        <tissue>Heart</tissue>
        <tissue>Kidney</tissue>
        <tissue>Liver</tissue>
        <tissue>Lung</tissue>
        <tissue>Pancreas</tissue>
        <tissue>Spleen</tissue>
        <tissue>Testis</tissue>
    </source>
</reference>
<reference key="7">
    <citation type="journal article" date="2011" name="PLoS ONE">
        <title>The E3 ubiquitin ligase activity of Trip12 is essential for mouse embryogenesis.</title>
        <authorList>
            <person name="Kajiro M."/>
            <person name="Tsuchiya M."/>
            <person name="Kawabe Y."/>
            <person name="Furumai R."/>
            <person name="Iwasaki N."/>
            <person name="Hayashi Y."/>
            <person name="Katano M."/>
            <person name="Nakajima Y."/>
            <person name="Goto N."/>
            <person name="Watanabe T."/>
            <person name="Murayama A."/>
            <person name="Oishi H."/>
            <person name="Ema M."/>
            <person name="Takahashi S."/>
            <person name="Kishimoto H."/>
            <person name="Yanagisawa J."/>
        </authorList>
    </citation>
    <scope>DISRUPTION PHENOTYPE</scope>
</reference>
<reference key="8">
    <citation type="journal article" date="2013" name="Mol. Cell">
        <title>SIRT5-mediated lysine desuccinylation impacts diverse metabolic pathways.</title>
        <authorList>
            <person name="Park J."/>
            <person name="Chen Y."/>
            <person name="Tishkoff D.X."/>
            <person name="Peng C."/>
            <person name="Tan M."/>
            <person name="Dai L."/>
            <person name="Xie Z."/>
            <person name="Zhang Y."/>
            <person name="Zwaans B.M."/>
            <person name="Skinner M.E."/>
            <person name="Lombard D.B."/>
            <person name="Zhao Y."/>
        </authorList>
    </citation>
    <scope>ACETYLATION [LARGE SCALE ANALYSIS] AT LYS-181 AND LYS-1458</scope>
    <scope>IDENTIFICATION BY MASS SPECTROMETRY [LARGE SCALE ANALYSIS]</scope>
    <source>
        <tissue>Embryonic fibroblast</tissue>
    </source>
</reference>